<proteinExistence type="evidence at protein level"/>
<evidence type="ECO:0000250" key="1"/>
<evidence type="ECO:0000250" key="2">
    <source>
        <dbReference type="UniProtKB" id="P61023"/>
    </source>
</evidence>
<evidence type="ECO:0000250" key="3">
    <source>
        <dbReference type="UniProtKB" id="Q99653"/>
    </source>
</evidence>
<evidence type="ECO:0000255" key="4">
    <source>
        <dbReference type="PROSITE-ProRule" id="PRU00448"/>
    </source>
</evidence>
<evidence type="ECO:0000269" key="5">
    <source>
    </source>
</evidence>
<evidence type="ECO:0000305" key="6"/>
<comment type="function">
    <text evidence="5">Calcium-binding protein involved in different processes such as regulation of vesicular trafficking, plasma membrane Na(+)/H(+) exchanger and gene transcription. Involved in the constitutive exocytic membrane traffic. Mediates the association between microtubules and membrane-bound organelles of the endoplasmic reticulum and Golgi apparatus and is also required for the targeting and fusion of transcytotic vesicles (TCV) with the plasma membrane. Functions as an integral cofactor in cell pH regulation by controlling plasma membrane-type Na(+)/H(+) exchange activity. Inhibits serum- and GTPase-stimulated Na(+)/H(+) exchange. Plays a role as an inhibitor of ribosomal RNA transcription. Acts as a negative regulator of the calcineurin/NFAT signaling pathway.</text>
</comment>
<comment type="subunit">
    <text evidence="1">Monomer.</text>
</comment>
<comment type="subcellular location">
    <subcellularLocation>
        <location evidence="2">Nucleus</location>
    </subcellularLocation>
    <subcellularLocation>
        <location evidence="2">Cytoplasm</location>
    </subcellularLocation>
    <subcellularLocation>
        <location evidence="2">Cytoplasm</location>
        <location evidence="2">Cytoskeleton</location>
    </subcellularLocation>
    <subcellularLocation>
        <location evidence="2">Endomembrane system</location>
    </subcellularLocation>
    <subcellularLocation>
        <location evidence="2">Endoplasmic reticulum-Golgi intermediate compartment</location>
    </subcellularLocation>
    <subcellularLocation>
        <location evidence="2">Endoplasmic reticulum</location>
    </subcellularLocation>
    <subcellularLocation>
        <location evidence="2">Cell membrane</location>
    </subcellularLocation>
    <subcellularLocation>
        <location evidence="3">Membrane</location>
        <topology evidence="3">Lipid-anchor</topology>
    </subcellularLocation>
</comment>
<comment type="PTM">
    <text evidence="1">Phosphorylated.</text>
</comment>
<comment type="PTM">
    <text>Calcium-binding or N-myristoylation are necessary for the Na(+)/H(+) exchange activities.</text>
</comment>
<comment type="similarity">
    <text evidence="6">Belongs to the calcineurin regulatory subunit family. CHP subfamily.</text>
</comment>
<reference key="1">
    <citation type="journal article" date="2005" name="Genome Biol.">
        <title>Full-length cDNAs from chicken bursal lymphocytes to facilitate gene function analysis.</title>
        <authorList>
            <person name="Caldwell R.B."/>
            <person name="Kierzek A.M."/>
            <person name="Arakawa H."/>
            <person name="Bezzubov Y."/>
            <person name="Zaim J."/>
            <person name="Fiedler P."/>
            <person name="Kutter S."/>
            <person name="Blagodatski A."/>
            <person name="Kostovska D."/>
            <person name="Koter M."/>
            <person name="Plachy J."/>
            <person name="Carninci P."/>
            <person name="Hayashizaki Y."/>
            <person name="Buerstedde J.-M."/>
        </authorList>
    </citation>
    <scope>NUCLEOTIDE SEQUENCE [LARGE SCALE MRNA]</scope>
    <source>
        <strain>CB</strain>
        <tissue>Bursa of Fabricius</tissue>
    </source>
</reference>
<reference key="2">
    <citation type="journal article" date="2007" name="Am. J. Physiol.">
        <title>Loss of calcineurin homologous protein-1 in chicken B lymphoma DT40 cells destabilizes Na+/H+ exchanger isoform-1 protein.</title>
        <authorList>
            <person name="Matsushita M."/>
            <person name="Sano Y."/>
            <person name="Yokoyama S."/>
            <person name="Takai T."/>
            <person name="Inoue H."/>
            <person name="Mitsui K."/>
            <person name="Todo K."/>
            <person name="Ohmori H."/>
            <person name="Kanazawa H."/>
        </authorList>
    </citation>
    <scope>FUNCTION</scope>
    <scope>MUTAGENESIS OF GLY-2; GLU-134 AND GLU-175</scope>
</reference>
<feature type="initiator methionine" description="Removed" evidence="1">
    <location>
        <position position="1"/>
    </location>
</feature>
<feature type="chain" id="PRO_0000073847" description="Calcineurin B homologous protein 1">
    <location>
        <begin position="2"/>
        <end position="195"/>
    </location>
</feature>
<feature type="domain" description="EF-hand 1" evidence="4">
    <location>
        <begin position="26"/>
        <end position="61"/>
    </location>
</feature>
<feature type="domain" description="EF-hand 2" evidence="6">
    <location>
        <begin position="66"/>
        <end position="101"/>
    </location>
</feature>
<feature type="domain" description="EF-hand 3" evidence="4">
    <location>
        <begin position="110"/>
        <end position="145"/>
    </location>
</feature>
<feature type="domain" description="EF-hand 4" evidence="4">
    <location>
        <begin position="151"/>
        <end position="186"/>
    </location>
</feature>
<feature type="binding site" evidence="4">
    <location>
        <position position="123"/>
    </location>
    <ligand>
        <name>Ca(2+)</name>
        <dbReference type="ChEBI" id="CHEBI:29108"/>
        <label>1</label>
    </ligand>
</feature>
<feature type="binding site" evidence="4">
    <location>
        <position position="125"/>
    </location>
    <ligand>
        <name>Ca(2+)</name>
        <dbReference type="ChEBI" id="CHEBI:29108"/>
        <label>1</label>
    </ligand>
</feature>
<feature type="binding site" evidence="4">
    <location>
        <position position="127"/>
    </location>
    <ligand>
        <name>Ca(2+)</name>
        <dbReference type="ChEBI" id="CHEBI:29108"/>
        <label>1</label>
    </ligand>
</feature>
<feature type="binding site" evidence="4">
    <location>
        <position position="129"/>
    </location>
    <ligand>
        <name>Ca(2+)</name>
        <dbReference type="ChEBI" id="CHEBI:29108"/>
        <label>1</label>
    </ligand>
</feature>
<feature type="binding site" evidence="4">
    <location>
        <position position="134"/>
    </location>
    <ligand>
        <name>Ca(2+)</name>
        <dbReference type="ChEBI" id="CHEBI:29108"/>
        <label>1</label>
    </ligand>
</feature>
<feature type="binding site" evidence="6">
    <location>
        <position position="164"/>
    </location>
    <ligand>
        <name>Ca(2+)</name>
        <dbReference type="ChEBI" id="CHEBI:29108"/>
        <label>2</label>
    </ligand>
</feature>
<feature type="binding site" evidence="6">
    <location>
        <position position="166"/>
    </location>
    <ligand>
        <name>Ca(2+)</name>
        <dbReference type="ChEBI" id="CHEBI:29108"/>
        <label>2</label>
    </ligand>
</feature>
<feature type="binding site" evidence="6">
    <location>
        <position position="168"/>
    </location>
    <ligand>
        <name>Ca(2+)</name>
        <dbReference type="ChEBI" id="CHEBI:29108"/>
        <label>2</label>
    </ligand>
</feature>
<feature type="binding site" evidence="6">
    <location>
        <position position="175"/>
    </location>
    <ligand>
        <name>Ca(2+)</name>
        <dbReference type="ChEBI" id="CHEBI:29108"/>
        <label>2</label>
    </ligand>
</feature>
<feature type="lipid moiety-binding region" description="N-myristoyl glycine" evidence="1">
    <location>
        <position position="2"/>
    </location>
</feature>
<feature type="mutagenesis site" description="Reduces SLC9A1/NHE1 stability. Does not reduce Na(+)/H(+) SLC9A1/NHE1 exchange activities." evidence="5">
    <original>G</original>
    <variation>A</variation>
    <location>
        <position position="2"/>
    </location>
</feature>
<feature type="mutagenesis site" description="Reduces SLC9A1/NHE1 stability and Na(+)/H(+) exchange activities; when associated with A-175." evidence="5">
    <original>E</original>
    <variation>A</variation>
    <location>
        <position position="134"/>
    </location>
</feature>
<feature type="mutagenesis site" description="Reduces SLC9A1/NHE1 stability and Na(+)/H(+) exchange activities; when associated with A-134." evidence="5">
    <original>E</original>
    <variation>A</variation>
    <location>
        <position position="175"/>
    </location>
</feature>
<name>CHP1_CHICK</name>
<protein>
    <recommendedName>
        <fullName>Calcineurin B homologous protein 1</fullName>
    </recommendedName>
    <alternativeName>
        <fullName>Calcineurin B-like protein</fullName>
    </alternativeName>
    <alternativeName>
        <fullName>Calcium-binding protein CHP</fullName>
    </alternativeName>
    <alternativeName>
        <fullName>Calcium-binding protein p22</fullName>
    </alternativeName>
    <alternativeName>
        <fullName>EF-hand calcium-binding domain-containing protein p22</fullName>
    </alternativeName>
</protein>
<accession>Q5ZM44</accession>
<sequence length="195" mass="22447">MGSRASTLLRDEEIEEIKKETGFSHSQITRLYSRFTSLDKGENGTLSREDFQRIPELAINPLGDRIINAFFSEGEDQVNFRGFMRTLAHFRPIEDNEKSKDQNGPEPLNSRSNKLHFAFRLYDLDKDDKISRDELLQVLRMMVGVNISDEQLGSIADRTIQEADQDGDCAISFAEFVKVLEKVDVEQKMSIRFLH</sequence>
<dbReference type="EMBL" id="AJ719540">
    <property type="protein sequence ID" value="CAG31199.1"/>
    <property type="molecule type" value="mRNA"/>
</dbReference>
<dbReference type="RefSeq" id="NP_001007931.1">
    <property type="nucleotide sequence ID" value="NM_001007930.1"/>
</dbReference>
<dbReference type="SMR" id="Q5ZM44"/>
<dbReference type="BioGRID" id="683765">
    <property type="interactions" value="1"/>
</dbReference>
<dbReference type="FunCoup" id="Q5ZM44">
    <property type="interactions" value="1389"/>
</dbReference>
<dbReference type="IntAct" id="Q5ZM44">
    <property type="interactions" value="1"/>
</dbReference>
<dbReference type="STRING" id="9031.ENSGALP00000032005"/>
<dbReference type="PaxDb" id="9031-ENSGALP00000032005"/>
<dbReference type="GeneID" id="423211"/>
<dbReference type="KEGG" id="gga:423211"/>
<dbReference type="CTD" id="11261"/>
<dbReference type="VEuPathDB" id="HostDB:geneid_423211"/>
<dbReference type="eggNOG" id="KOG0034">
    <property type="taxonomic scope" value="Eukaryota"/>
</dbReference>
<dbReference type="HOGENOM" id="CLU_061288_10_5_1"/>
<dbReference type="InParanoid" id="Q5ZM44"/>
<dbReference type="OMA" id="LKFAFRM"/>
<dbReference type="OrthoDB" id="191686at2759"/>
<dbReference type="PhylomeDB" id="Q5ZM44"/>
<dbReference type="TreeFam" id="TF354284"/>
<dbReference type="Reactome" id="R-GGA-2160916">
    <property type="pathway name" value="Hyaluronan uptake and degradation"/>
</dbReference>
<dbReference type="PRO" id="PR:Q5ZM44"/>
<dbReference type="Proteomes" id="UP000000539">
    <property type="component" value="Chromosome 5"/>
</dbReference>
<dbReference type="Bgee" id="ENSGALG00000008569">
    <property type="expression patterns" value="Expressed in spermatid and 14 other cell types or tissues"/>
</dbReference>
<dbReference type="GO" id="GO:0005737">
    <property type="term" value="C:cytoplasm"/>
    <property type="evidence" value="ECO:0000250"/>
    <property type="project" value="UniProtKB"/>
</dbReference>
<dbReference type="GO" id="GO:0005783">
    <property type="term" value="C:endoplasmic reticulum"/>
    <property type="evidence" value="ECO:0000250"/>
    <property type="project" value="UniProtKB"/>
</dbReference>
<dbReference type="GO" id="GO:0005793">
    <property type="term" value="C:endoplasmic reticulum-Golgi intermediate compartment"/>
    <property type="evidence" value="ECO:0007669"/>
    <property type="project" value="UniProtKB-SubCell"/>
</dbReference>
<dbReference type="GO" id="GO:0000139">
    <property type="term" value="C:Golgi membrane"/>
    <property type="evidence" value="ECO:0000250"/>
    <property type="project" value="UniProtKB"/>
</dbReference>
<dbReference type="GO" id="GO:0015630">
    <property type="term" value="C:microtubule cytoskeleton"/>
    <property type="evidence" value="ECO:0000250"/>
    <property type="project" value="UniProtKB"/>
</dbReference>
<dbReference type="GO" id="GO:0005634">
    <property type="term" value="C:nucleus"/>
    <property type="evidence" value="ECO:0000250"/>
    <property type="project" value="UniProtKB"/>
</dbReference>
<dbReference type="GO" id="GO:0005886">
    <property type="term" value="C:plasma membrane"/>
    <property type="evidence" value="ECO:0000250"/>
    <property type="project" value="UniProtKB"/>
</dbReference>
<dbReference type="GO" id="GO:0030133">
    <property type="term" value="C:transport vesicle"/>
    <property type="evidence" value="ECO:0000250"/>
    <property type="project" value="UniProtKB"/>
</dbReference>
<dbReference type="GO" id="GO:0005509">
    <property type="term" value="F:calcium ion binding"/>
    <property type="evidence" value="ECO:0000250"/>
    <property type="project" value="UniProtKB"/>
</dbReference>
<dbReference type="GO" id="GO:0048306">
    <property type="term" value="F:calcium-dependent protein binding"/>
    <property type="evidence" value="ECO:0000250"/>
    <property type="project" value="UniProtKB"/>
</dbReference>
<dbReference type="GO" id="GO:0019900">
    <property type="term" value="F:kinase binding"/>
    <property type="evidence" value="ECO:0000250"/>
    <property type="project" value="UniProtKB"/>
</dbReference>
<dbReference type="GO" id="GO:0008017">
    <property type="term" value="F:microtubule binding"/>
    <property type="evidence" value="ECO:0000250"/>
    <property type="project" value="UniProtKB"/>
</dbReference>
<dbReference type="GO" id="GO:0004860">
    <property type="term" value="F:protein kinase inhibitor activity"/>
    <property type="evidence" value="ECO:0007669"/>
    <property type="project" value="UniProtKB-KW"/>
</dbReference>
<dbReference type="GO" id="GO:0071468">
    <property type="term" value="P:cellular response to acidic pH"/>
    <property type="evidence" value="ECO:0000314"/>
    <property type="project" value="UniProtKB"/>
</dbReference>
<dbReference type="GO" id="GO:0031122">
    <property type="term" value="P:cytoplasmic microtubule organization"/>
    <property type="evidence" value="ECO:0000250"/>
    <property type="project" value="UniProtKB"/>
</dbReference>
<dbReference type="GO" id="GO:0022406">
    <property type="term" value="P:membrane docking"/>
    <property type="evidence" value="ECO:0000250"/>
    <property type="project" value="UniProtKB"/>
</dbReference>
<dbReference type="GO" id="GO:0061025">
    <property type="term" value="P:membrane fusion"/>
    <property type="evidence" value="ECO:0000250"/>
    <property type="project" value="UniProtKB"/>
</dbReference>
<dbReference type="GO" id="GO:0061024">
    <property type="term" value="P:membrane organization"/>
    <property type="evidence" value="ECO:0000250"/>
    <property type="project" value="UniProtKB"/>
</dbReference>
<dbReference type="GO" id="GO:0001578">
    <property type="term" value="P:microtubule bundle formation"/>
    <property type="evidence" value="ECO:0000250"/>
    <property type="project" value="UniProtKB"/>
</dbReference>
<dbReference type="GO" id="GO:0070885">
    <property type="term" value="P:negative regulation of calcineurin-NFAT signaling cascade"/>
    <property type="evidence" value="ECO:0000250"/>
    <property type="project" value="UniProtKB"/>
</dbReference>
<dbReference type="GO" id="GO:0032088">
    <property type="term" value="P:negative regulation of NF-kappaB transcription factor activity"/>
    <property type="evidence" value="ECO:0000250"/>
    <property type="project" value="UniProtKB"/>
</dbReference>
<dbReference type="GO" id="GO:0010923">
    <property type="term" value="P:negative regulation of phosphatase activity"/>
    <property type="evidence" value="ECO:0000250"/>
    <property type="project" value="UniProtKB"/>
</dbReference>
<dbReference type="GO" id="GO:0031953">
    <property type="term" value="P:negative regulation of protein autophosphorylation"/>
    <property type="evidence" value="ECO:0000250"/>
    <property type="project" value="UniProtKB"/>
</dbReference>
<dbReference type="GO" id="GO:0042308">
    <property type="term" value="P:negative regulation of protein import into nucleus"/>
    <property type="evidence" value="ECO:0000250"/>
    <property type="project" value="UniProtKB"/>
</dbReference>
<dbReference type="GO" id="GO:0006469">
    <property type="term" value="P:negative regulation of protein kinase activity"/>
    <property type="evidence" value="ECO:0000250"/>
    <property type="project" value="UniProtKB"/>
</dbReference>
<dbReference type="GO" id="GO:0001933">
    <property type="term" value="P:negative regulation of protein phosphorylation"/>
    <property type="evidence" value="ECO:0000250"/>
    <property type="project" value="UniProtKB"/>
</dbReference>
<dbReference type="GO" id="GO:0031397">
    <property type="term" value="P:negative regulation of protein ubiquitination"/>
    <property type="evidence" value="ECO:0000250"/>
    <property type="project" value="UniProtKB"/>
</dbReference>
<dbReference type="GO" id="GO:0060050">
    <property type="term" value="P:positive regulation of protein glycosylation"/>
    <property type="evidence" value="ECO:0000250"/>
    <property type="project" value="UniProtKB"/>
</dbReference>
<dbReference type="GO" id="GO:0090314">
    <property type="term" value="P:positive regulation of protein targeting to membrane"/>
    <property type="evidence" value="ECO:0000314"/>
    <property type="project" value="UniProtKB"/>
</dbReference>
<dbReference type="GO" id="GO:0051222">
    <property type="term" value="P:positive regulation of protein transport"/>
    <property type="evidence" value="ECO:0000250"/>
    <property type="project" value="UniProtKB"/>
</dbReference>
<dbReference type="GO" id="GO:0032417">
    <property type="term" value="P:positive regulation of sodium:proton antiporter activity"/>
    <property type="evidence" value="ECO:0000315"/>
    <property type="project" value="UniProtKB"/>
</dbReference>
<dbReference type="GO" id="GO:0006611">
    <property type="term" value="P:protein export from nucleus"/>
    <property type="evidence" value="ECO:0000250"/>
    <property type="project" value="UniProtKB"/>
</dbReference>
<dbReference type="GO" id="GO:0050821">
    <property type="term" value="P:protein stabilization"/>
    <property type="evidence" value="ECO:0000314"/>
    <property type="project" value="UniProtKB"/>
</dbReference>
<dbReference type="GO" id="GO:0051453">
    <property type="term" value="P:regulation of intracellular pH"/>
    <property type="evidence" value="ECO:0000250"/>
    <property type="project" value="UniProtKB"/>
</dbReference>
<dbReference type="CDD" id="cd00051">
    <property type="entry name" value="EFh"/>
    <property type="match status" value="1"/>
</dbReference>
<dbReference type="FunFam" id="1.10.238.10:FF:000093">
    <property type="entry name" value="Calcineurin B homologous protein 1"/>
    <property type="match status" value="1"/>
</dbReference>
<dbReference type="Gene3D" id="1.10.238.10">
    <property type="entry name" value="EF-hand"/>
    <property type="match status" value="1"/>
</dbReference>
<dbReference type="InterPro" id="IPR051875">
    <property type="entry name" value="Calcineurin_B_homologous"/>
</dbReference>
<dbReference type="InterPro" id="IPR011992">
    <property type="entry name" value="EF-hand-dom_pair"/>
</dbReference>
<dbReference type="InterPro" id="IPR018247">
    <property type="entry name" value="EF_Hand_1_Ca_BS"/>
</dbReference>
<dbReference type="InterPro" id="IPR002048">
    <property type="entry name" value="EF_hand_dom"/>
</dbReference>
<dbReference type="PANTHER" id="PTHR46002">
    <property type="entry name" value="EG:114D9.1 PROTEIN-RELATED"/>
    <property type="match status" value="1"/>
</dbReference>
<dbReference type="Pfam" id="PF13499">
    <property type="entry name" value="EF-hand_7"/>
    <property type="match status" value="1"/>
</dbReference>
<dbReference type="SMART" id="SM00054">
    <property type="entry name" value="EFh"/>
    <property type="match status" value="2"/>
</dbReference>
<dbReference type="SUPFAM" id="SSF47473">
    <property type="entry name" value="EF-hand"/>
    <property type="match status" value="1"/>
</dbReference>
<dbReference type="PROSITE" id="PS00018">
    <property type="entry name" value="EF_HAND_1"/>
    <property type="match status" value="1"/>
</dbReference>
<dbReference type="PROSITE" id="PS50222">
    <property type="entry name" value="EF_HAND_2"/>
    <property type="match status" value="3"/>
</dbReference>
<keyword id="KW-0106">Calcium</keyword>
<keyword id="KW-1003">Cell membrane</keyword>
<keyword id="KW-0963">Cytoplasm</keyword>
<keyword id="KW-0206">Cytoskeleton</keyword>
<keyword id="KW-0256">Endoplasmic reticulum</keyword>
<keyword id="KW-0449">Lipoprotein</keyword>
<keyword id="KW-0472">Membrane</keyword>
<keyword id="KW-0479">Metal-binding</keyword>
<keyword id="KW-0519">Myristate</keyword>
<keyword id="KW-0539">Nucleus</keyword>
<keyword id="KW-0597">Phosphoprotein</keyword>
<keyword id="KW-0649">Protein kinase inhibitor</keyword>
<keyword id="KW-0653">Protein transport</keyword>
<keyword id="KW-1185">Reference proteome</keyword>
<keyword id="KW-0677">Repeat</keyword>
<keyword id="KW-0813">Transport</keyword>
<organism>
    <name type="scientific">Gallus gallus</name>
    <name type="common">Chicken</name>
    <dbReference type="NCBI Taxonomy" id="9031"/>
    <lineage>
        <taxon>Eukaryota</taxon>
        <taxon>Metazoa</taxon>
        <taxon>Chordata</taxon>
        <taxon>Craniata</taxon>
        <taxon>Vertebrata</taxon>
        <taxon>Euteleostomi</taxon>
        <taxon>Archelosauria</taxon>
        <taxon>Archosauria</taxon>
        <taxon>Dinosauria</taxon>
        <taxon>Saurischia</taxon>
        <taxon>Theropoda</taxon>
        <taxon>Coelurosauria</taxon>
        <taxon>Aves</taxon>
        <taxon>Neognathae</taxon>
        <taxon>Galloanserae</taxon>
        <taxon>Galliformes</taxon>
        <taxon>Phasianidae</taxon>
        <taxon>Phasianinae</taxon>
        <taxon>Gallus</taxon>
    </lineage>
</organism>
<gene>
    <name type="primary">CHP1</name>
    <name type="synonym">CHP</name>
    <name type="ORF">RCJMB04_3d7</name>
</gene>